<proteinExistence type="inferred from homology"/>
<comment type="function">
    <text evidence="1">Exhibits a very high intrinsic GTPase hydrolysis rate. Involved in the addition of a carboxymethylaminomethyl (cmnm) group at the wobble position (U34) of certain tRNAs, forming tRNA-cmnm(5)s(2)U34.</text>
</comment>
<comment type="cofactor">
    <cofactor evidence="1">
        <name>K(+)</name>
        <dbReference type="ChEBI" id="CHEBI:29103"/>
    </cofactor>
    <text evidence="1">Binds 1 potassium ion per subunit.</text>
</comment>
<comment type="subunit">
    <text evidence="1">Homodimer. Heterotetramer of two MnmE and two MnmG subunits.</text>
</comment>
<comment type="subcellular location">
    <subcellularLocation>
        <location evidence="1">Cytoplasm</location>
    </subcellularLocation>
</comment>
<comment type="similarity">
    <text evidence="1">Belongs to the TRAFAC class TrmE-Era-EngA-EngB-Septin-like GTPase superfamily. TrmE GTPase family.</text>
</comment>
<name>MNME_PROM2</name>
<gene>
    <name evidence="1" type="primary">mnmE</name>
    <name evidence="1" type="synonym">trmE</name>
    <name type="ordered locus">P9215_02071</name>
</gene>
<organism>
    <name type="scientific">Prochlorococcus marinus (strain MIT 9215)</name>
    <dbReference type="NCBI Taxonomy" id="93060"/>
    <lineage>
        <taxon>Bacteria</taxon>
        <taxon>Bacillati</taxon>
        <taxon>Cyanobacteriota</taxon>
        <taxon>Cyanophyceae</taxon>
        <taxon>Synechococcales</taxon>
        <taxon>Prochlorococcaceae</taxon>
        <taxon>Prochlorococcus</taxon>
    </lineage>
</organism>
<dbReference type="EC" id="3.6.-.-" evidence="1"/>
<dbReference type="EMBL" id="CP000825">
    <property type="protein sequence ID" value="ABV49826.1"/>
    <property type="molecule type" value="Genomic_DNA"/>
</dbReference>
<dbReference type="RefSeq" id="WP_012006996.1">
    <property type="nucleotide sequence ID" value="NC_009840.1"/>
</dbReference>
<dbReference type="SMR" id="A8G2J5"/>
<dbReference type="STRING" id="93060.P9215_02071"/>
<dbReference type="KEGG" id="pmh:P9215_02071"/>
<dbReference type="eggNOG" id="COG0486">
    <property type="taxonomic scope" value="Bacteria"/>
</dbReference>
<dbReference type="HOGENOM" id="CLU_019624_4_1_3"/>
<dbReference type="OrthoDB" id="9805918at2"/>
<dbReference type="Proteomes" id="UP000002014">
    <property type="component" value="Chromosome"/>
</dbReference>
<dbReference type="GO" id="GO:0005829">
    <property type="term" value="C:cytosol"/>
    <property type="evidence" value="ECO:0007669"/>
    <property type="project" value="TreeGrafter"/>
</dbReference>
<dbReference type="GO" id="GO:0005525">
    <property type="term" value="F:GTP binding"/>
    <property type="evidence" value="ECO:0007669"/>
    <property type="project" value="UniProtKB-UniRule"/>
</dbReference>
<dbReference type="GO" id="GO:0003924">
    <property type="term" value="F:GTPase activity"/>
    <property type="evidence" value="ECO:0007669"/>
    <property type="project" value="UniProtKB-UniRule"/>
</dbReference>
<dbReference type="GO" id="GO:0046872">
    <property type="term" value="F:metal ion binding"/>
    <property type="evidence" value="ECO:0007669"/>
    <property type="project" value="UniProtKB-KW"/>
</dbReference>
<dbReference type="GO" id="GO:0030488">
    <property type="term" value="P:tRNA methylation"/>
    <property type="evidence" value="ECO:0007669"/>
    <property type="project" value="TreeGrafter"/>
</dbReference>
<dbReference type="GO" id="GO:0002098">
    <property type="term" value="P:tRNA wobble uridine modification"/>
    <property type="evidence" value="ECO:0007669"/>
    <property type="project" value="TreeGrafter"/>
</dbReference>
<dbReference type="CDD" id="cd04164">
    <property type="entry name" value="trmE"/>
    <property type="match status" value="1"/>
</dbReference>
<dbReference type="CDD" id="cd14858">
    <property type="entry name" value="TrmE_N"/>
    <property type="match status" value="1"/>
</dbReference>
<dbReference type="FunFam" id="3.30.1360.120:FF:000003">
    <property type="entry name" value="tRNA modification GTPase MnmE"/>
    <property type="match status" value="1"/>
</dbReference>
<dbReference type="Gene3D" id="3.40.50.300">
    <property type="entry name" value="P-loop containing nucleotide triphosphate hydrolases"/>
    <property type="match status" value="1"/>
</dbReference>
<dbReference type="Gene3D" id="3.30.1360.120">
    <property type="entry name" value="Probable tRNA modification gtpase trme, domain 1"/>
    <property type="match status" value="1"/>
</dbReference>
<dbReference type="Gene3D" id="1.20.120.430">
    <property type="entry name" value="tRNA modification GTPase MnmE domain 2"/>
    <property type="match status" value="1"/>
</dbReference>
<dbReference type="HAMAP" id="MF_00379">
    <property type="entry name" value="GTPase_MnmE"/>
    <property type="match status" value="1"/>
</dbReference>
<dbReference type="InterPro" id="IPR031168">
    <property type="entry name" value="G_TrmE"/>
</dbReference>
<dbReference type="InterPro" id="IPR006073">
    <property type="entry name" value="GTP-bd"/>
</dbReference>
<dbReference type="InterPro" id="IPR018948">
    <property type="entry name" value="GTP-bd_TrmE_N"/>
</dbReference>
<dbReference type="InterPro" id="IPR004520">
    <property type="entry name" value="GTPase_MnmE"/>
</dbReference>
<dbReference type="InterPro" id="IPR027368">
    <property type="entry name" value="MnmE_dom2"/>
</dbReference>
<dbReference type="InterPro" id="IPR025867">
    <property type="entry name" value="MnmE_helical"/>
</dbReference>
<dbReference type="InterPro" id="IPR027417">
    <property type="entry name" value="P-loop_NTPase"/>
</dbReference>
<dbReference type="InterPro" id="IPR005225">
    <property type="entry name" value="Small_GTP-bd"/>
</dbReference>
<dbReference type="InterPro" id="IPR027266">
    <property type="entry name" value="TrmE/GcvT_dom1"/>
</dbReference>
<dbReference type="NCBIfam" id="TIGR00450">
    <property type="entry name" value="mnmE_trmE_thdF"/>
    <property type="match status" value="1"/>
</dbReference>
<dbReference type="NCBIfam" id="TIGR00231">
    <property type="entry name" value="small_GTP"/>
    <property type="match status" value="1"/>
</dbReference>
<dbReference type="PANTHER" id="PTHR42714">
    <property type="entry name" value="TRNA MODIFICATION GTPASE GTPBP3"/>
    <property type="match status" value="1"/>
</dbReference>
<dbReference type="PANTHER" id="PTHR42714:SF2">
    <property type="entry name" value="TRNA MODIFICATION GTPASE GTPBP3, MITOCHONDRIAL"/>
    <property type="match status" value="1"/>
</dbReference>
<dbReference type="Pfam" id="PF01926">
    <property type="entry name" value="MMR_HSR1"/>
    <property type="match status" value="1"/>
</dbReference>
<dbReference type="Pfam" id="PF12631">
    <property type="entry name" value="MnmE_helical"/>
    <property type="match status" value="1"/>
</dbReference>
<dbReference type="Pfam" id="PF10396">
    <property type="entry name" value="TrmE_N"/>
    <property type="match status" value="1"/>
</dbReference>
<dbReference type="PRINTS" id="PR00449">
    <property type="entry name" value="RASTRNSFRMNG"/>
</dbReference>
<dbReference type="SUPFAM" id="SSF52540">
    <property type="entry name" value="P-loop containing nucleoside triphosphate hydrolases"/>
    <property type="match status" value="1"/>
</dbReference>
<dbReference type="PROSITE" id="PS51709">
    <property type="entry name" value="G_TRME"/>
    <property type="match status" value="1"/>
</dbReference>
<reference key="1">
    <citation type="journal article" date="2007" name="PLoS Genet.">
        <title>Patterns and implications of gene gain and loss in the evolution of Prochlorococcus.</title>
        <authorList>
            <person name="Kettler G.C."/>
            <person name="Martiny A.C."/>
            <person name="Huang K."/>
            <person name="Zucker J."/>
            <person name="Coleman M.L."/>
            <person name="Rodrigue S."/>
            <person name="Chen F."/>
            <person name="Lapidus A."/>
            <person name="Ferriera S."/>
            <person name="Johnson J."/>
            <person name="Steglich C."/>
            <person name="Church G.M."/>
            <person name="Richardson P."/>
            <person name="Chisholm S.W."/>
        </authorList>
    </citation>
    <scope>NUCLEOTIDE SEQUENCE [LARGE SCALE GENOMIC DNA]</scope>
    <source>
        <strain>MIT 9215</strain>
    </source>
</reference>
<feature type="chain" id="PRO_1000060050" description="tRNA modification GTPase MnmE">
    <location>
        <begin position="1"/>
        <end position="460"/>
    </location>
</feature>
<feature type="domain" description="TrmE-type G">
    <location>
        <begin position="227"/>
        <end position="383"/>
    </location>
</feature>
<feature type="binding site" evidence="1">
    <location>
        <position position="29"/>
    </location>
    <ligand>
        <name>(6S)-5-formyl-5,6,7,8-tetrahydrofolate</name>
        <dbReference type="ChEBI" id="CHEBI:57457"/>
    </ligand>
</feature>
<feature type="binding site" evidence="1">
    <location>
        <position position="91"/>
    </location>
    <ligand>
        <name>(6S)-5-formyl-5,6,7,8-tetrahydrofolate</name>
        <dbReference type="ChEBI" id="CHEBI:57457"/>
    </ligand>
</feature>
<feature type="binding site" evidence="1">
    <location>
        <position position="132"/>
    </location>
    <ligand>
        <name>(6S)-5-formyl-5,6,7,8-tetrahydrofolate</name>
        <dbReference type="ChEBI" id="CHEBI:57457"/>
    </ligand>
</feature>
<feature type="binding site" evidence="1">
    <location>
        <begin position="237"/>
        <end position="242"/>
    </location>
    <ligand>
        <name>GTP</name>
        <dbReference type="ChEBI" id="CHEBI:37565"/>
    </ligand>
</feature>
<feature type="binding site" evidence="1">
    <location>
        <position position="237"/>
    </location>
    <ligand>
        <name>K(+)</name>
        <dbReference type="ChEBI" id="CHEBI:29103"/>
    </ligand>
</feature>
<feature type="binding site" evidence="1">
    <location>
        <position position="241"/>
    </location>
    <ligand>
        <name>Mg(2+)</name>
        <dbReference type="ChEBI" id="CHEBI:18420"/>
    </ligand>
</feature>
<feature type="binding site" evidence="1">
    <location>
        <begin position="256"/>
        <end position="262"/>
    </location>
    <ligand>
        <name>GTP</name>
        <dbReference type="ChEBI" id="CHEBI:37565"/>
    </ligand>
</feature>
<feature type="binding site" evidence="1">
    <location>
        <position position="256"/>
    </location>
    <ligand>
        <name>K(+)</name>
        <dbReference type="ChEBI" id="CHEBI:29103"/>
    </ligand>
</feature>
<feature type="binding site" evidence="1">
    <location>
        <position position="258"/>
    </location>
    <ligand>
        <name>K(+)</name>
        <dbReference type="ChEBI" id="CHEBI:29103"/>
    </ligand>
</feature>
<feature type="binding site" evidence="1">
    <location>
        <position position="261"/>
    </location>
    <ligand>
        <name>K(+)</name>
        <dbReference type="ChEBI" id="CHEBI:29103"/>
    </ligand>
</feature>
<feature type="binding site" evidence="1">
    <location>
        <position position="262"/>
    </location>
    <ligand>
        <name>Mg(2+)</name>
        <dbReference type="ChEBI" id="CHEBI:18420"/>
    </ligand>
</feature>
<feature type="binding site" evidence="1">
    <location>
        <begin position="281"/>
        <end position="284"/>
    </location>
    <ligand>
        <name>GTP</name>
        <dbReference type="ChEBI" id="CHEBI:37565"/>
    </ligand>
</feature>
<feature type="binding site" evidence="1">
    <location>
        <position position="460"/>
    </location>
    <ligand>
        <name>(6S)-5-formyl-5,6,7,8-tetrahydrofolate</name>
        <dbReference type="ChEBI" id="CHEBI:57457"/>
    </ligand>
</feature>
<sequence>MDSIVTTEDTIAAIASAISIGKGGVAIIRVSGKDSINSCKKIVQTKSKYAWESHRVFHGFIQENKQNKFIDEVLISVMKSPNSFTGEDVVELHCHGGIIIVNKVLKILLSSNSRVRLANPGEFSQRAFLNGKIDLTQAESINQLINASNTRSAELAFSGIQGEIKKKINDIKNDLINQLCEIEARVDFEEDFTDFDYTKYLKNIKKVKEKIELLIENAKRNSYIHNGISIALIGKTNVGKSSLLNLLAKKEKAIVTNIPGTTRDVIEINLTINDIPMKIIDTAGIRETSEQIERIGIKKSFRKIKESDFIIYIYSLEEGFNEEDKKIIQEIPKEKLITILGNKKDLIDCKNINSNELKNTILMSIKNNDGERLLIDTIIKKCGLKQVENINIFLNERHLANLSACLSNLNDTDEIIKNKLPFDLLSIELRDGIQNLSKITGQELTEELLDNIFSKFCIGK</sequence>
<keyword id="KW-0963">Cytoplasm</keyword>
<keyword id="KW-0342">GTP-binding</keyword>
<keyword id="KW-0378">Hydrolase</keyword>
<keyword id="KW-0460">Magnesium</keyword>
<keyword id="KW-0479">Metal-binding</keyword>
<keyword id="KW-0547">Nucleotide-binding</keyword>
<keyword id="KW-0630">Potassium</keyword>
<keyword id="KW-0819">tRNA processing</keyword>
<accession>A8G2J5</accession>
<evidence type="ECO:0000255" key="1">
    <source>
        <dbReference type="HAMAP-Rule" id="MF_00379"/>
    </source>
</evidence>
<protein>
    <recommendedName>
        <fullName evidence="1">tRNA modification GTPase MnmE</fullName>
        <ecNumber evidence="1">3.6.-.-</ecNumber>
    </recommendedName>
</protein>